<gene>
    <name evidence="1" type="primary">pxpA</name>
    <name type="ordered locus">EcSMS35_0728</name>
</gene>
<organism>
    <name type="scientific">Escherichia coli (strain SMS-3-5 / SECEC)</name>
    <dbReference type="NCBI Taxonomy" id="439855"/>
    <lineage>
        <taxon>Bacteria</taxon>
        <taxon>Pseudomonadati</taxon>
        <taxon>Pseudomonadota</taxon>
        <taxon>Gammaproteobacteria</taxon>
        <taxon>Enterobacterales</taxon>
        <taxon>Enterobacteriaceae</taxon>
        <taxon>Escherichia</taxon>
    </lineage>
</organism>
<feature type="chain" id="PRO_1000132056" description="5-oxoprolinase subunit A">
    <location>
        <begin position="1"/>
        <end position="244"/>
    </location>
</feature>
<evidence type="ECO:0000255" key="1">
    <source>
        <dbReference type="HAMAP-Rule" id="MF_00691"/>
    </source>
</evidence>
<reference key="1">
    <citation type="journal article" date="2008" name="J. Bacteriol.">
        <title>Insights into the environmental resistance gene pool from the genome sequence of the multidrug-resistant environmental isolate Escherichia coli SMS-3-5.</title>
        <authorList>
            <person name="Fricke W.F."/>
            <person name="Wright M.S."/>
            <person name="Lindell A.H."/>
            <person name="Harkins D.M."/>
            <person name="Baker-Austin C."/>
            <person name="Ravel J."/>
            <person name="Stepanauskas R."/>
        </authorList>
    </citation>
    <scope>NUCLEOTIDE SEQUENCE [LARGE SCALE GENOMIC DNA]</scope>
    <source>
        <strain>SMS-3-5 / SECEC</strain>
    </source>
</reference>
<protein>
    <recommendedName>
        <fullName evidence="1">5-oxoprolinase subunit A</fullName>
        <shortName evidence="1">5-OPase subunit A</shortName>
        <ecNumber evidence="1">3.5.2.9</ecNumber>
    </recommendedName>
    <alternativeName>
        <fullName evidence="1">5-oxoprolinase (ATP-hydrolyzing) subunit A</fullName>
    </alternativeName>
</protein>
<dbReference type="EC" id="3.5.2.9" evidence="1"/>
<dbReference type="EMBL" id="CP000970">
    <property type="protein sequence ID" value="ACB18173.1"/>
    <property type="molecule type" value="Genomic_DNA"/>
</dbReference>
<dbReference type="RefSeq" id="WP_000687175.1">
    <property type="nucleotide sequence ID" value="NC_010498.1"/>
</dbReference>
<dbReference type="SMR" id="B1LLF0"/>
<dbReference type="KEGG" id="ecm:EcSMS35_0728"/>
<dbReference type="HOGENOM" id="CLU_069535_0_0_6"/>
<dbReference type="Proteomes" id="UP000007011">
    <property type="component" value="Chromosome"/>
</dbReference>
<dbReference type="GO" id="GO:0017168">
    <property type="term" value="F:5-oxoprolinase (ATP-hydrolyzing) activity"/>
    <property type="evidence" value="ECO:0007669"/>
    <property type="project" value="UniProtKB-UniRule"/>
</dbReference>
<dbReference type="GO" id="GO:0005524">
    <property type="term" value="F:ATP binding"/>
    <property type="evidence" value="ECO:0007669"/>
    <property type="project" value="UniProtKB-UniRule"/>
</dbReference>
<dbReference type="GO" id="GO:0005975">
    <property type="term" value="P:carbohydrate metabolic process"/>
    <property type="evidence" value="ECO:0007669"/>
    <property type="project" value="InterPro"/>
</dbReference>
<dbReference type="CDD" id="cd10800">
    <property type="entry name" value="LamB_YcsF_YbgL_like"/>
    <property type="match status" value="1"/>
</dbReference>
<dbReference type="Gene3D" id="3.20.20.370">
    <property type="entry name" value="Glycoside hydrolase/deacetylase"/>
    <property type="match status" value="1"/>
</dbReference>
<dbReference type="HAMAP" id="MF_00691">
    <property type="entry name" value="PxpA"/>
    <property type="match status" value="1"/>
</dbReference>
<dbReference type="InterPro" id="IPR011330">
    <property type="entry name" value="Glyco_hydro/deAcase_b/a-brl"/>
</dbReference>
<dbReference type="InterPro" id="IPR005501">
    <property type="entry name" value="LamB/YcsF/PxpA-like"/>
</dbReference>
<dbReference type="NCBIfam" id="NF003812">
    <property type="entry name" value="PRK05406.1-1"/>
    <property type="match status" value="1"/>
</dbReference>
<dbReference type="NCBIfam" id="NF003814">
    <property type="entry name" value="PRK05406.1-3"/>
    <property type="match status" value="1"/>
</dbReference>
<dbReference type="NCBIfam" id="NF003815">
    <property type="entry name" value="PRK05406.1-4"/>
    <property type="match status" value="1"/>
</dbReference>
<dbReference type="NCBIfam" id="NF003816">
    <property type="entry name" value="PRK05406.1-5"/>
    <property type="match status" value="1"/>
</dbReference>
<dbReference type="PANTHER" id="PTHR30292:SF0">
    <property type="entry name" value="5-OXOPROLINASE SUBUNIT A"/>
    <property type="match status" value="1"/>
</dbReference>
<dbReference type="PANTHER" id="PTHR30292">
    <property type="entry name" value="UNCHARACTERIZED PROTEIN YBGL-RELATED"/>
    <property type="match status" value="1"/>
</dbReference>
<dbReference type="Pfam" id="PF03746">
    <property type="entry name" value="LamB_YcsF"/>
    <property type="match status" value="1"/>
</dbReference>
<dbReference type="SUPFAM" id="SSF88713">
    <property type="entry name" value="Glycoside hydrolase/deacetylase"/>
    <property type="match status" value="1"/>
</dbReference>
<comment type="function">
    <text evidence="1">Catalyzes the cleavage of 5-oxoproline to form L-glutamate coupled to the hydrolysis of ATP to ADP and inorganic phosphate.</text>
</comment>
<comment type="catalytic activity">
    <reaction evidence="1">
        <text>5-oxo-L-proline + ATP + 2 H2O = L-glutamate + ADP + phosphate + H(+)</text>
        <dbReference type="Rhea" id="RHEA:10348"/>
        <dbReference type="ChEBI" id="CHEBI:15377"/>
        <dbReference type="ChEBI" id="CHEBI:15378"/>
        <dbReference type="ChEBI" id="CHEBI:29985"/>
        <dbReference type="ChEBI" id="CHEBI:30616"/>
        <dbReference type="ChEBI" id="CHEBI:43474"/>
        <dbReference type="ChEBI" id="CHEBI:58402"/>
        <dbReference type="ChEBI" id="CHEBI:456216"/>
        <dbReference type="EC" id="3.5.2.9"/>
    </reaction>
</comment>
<comment type="subunit">
    <text evidence="1">Forms a complex composed of PxpA, PxpB and PxpC.</text>
</comment>
<comment type="similarity">
    <text evidence="1">Belongs to the LamB/PxpA family.</text>
</comment>
<proteinExistence type="inferred from homology"/>
<keyword id="KW-0067">ATP-binding</keyword>
<keyword id="KW-0378">Hydrolase</keyword>
<keyword id="KW-0547">Nucleotide-binding</keyword>
<name>PXPA_ECOSM</name>
<sequence length="244" mass="25829">MKIDLNADLGEGYASDAELLTLVSSANIACGFHAGDAQTMQACVREAIKNGVAIGAHPSFPDRENFGRSAMQLPPETAFAQTLYQIGALAAIARAQGGVMRHVKPHGMLYNQAAKEAQLADAIARAVYACDPALILVGLAGSELIRAGKQYGLTTREEVFADRGYQADGSLVPRSQPGALIEDEEQALAQTLEMVQHGRVKSITGEWATVTAQTVCLHGDGEHALAFARRLRATFAEKGIVVAA</sequence>
<accession>B1LLF0</accession>